<dbReference type="EMBL" id="AE009950">
    <property type="protein sequence ID" value="AAL80500.1"/>
    <property type="molecule type" value="Genomic_DNA"/>
</dbReference>
<dbReference type="RefSeq" id="WP_011011490.1">
    <property type="nucleotide sequence ID" value="NZ_CP023154.1"/>
</dbReference>
<dbReference type="PDB" id="4V6U">
    <property type="method" value="EM"/>
    <property type="resolution" value="6.60 A"/>
    <property type="chains" value="Bl=1-77"/>
</dbReference>
<dbReference type="PDBsum" id="4V6U"/>
<dbReference type="SMR" id="Q8U3S9"/>
<dbReference type="STRING" id="186497.PF0376"/>
<dbReference type="PaxDb" id="186497-PF0376"/>
<dbReference type="GeneID" id="41712158"/>
<dbReference type="KEGG" id="pfu:PF0376"/>
<dbReference type="PATRIC" id="fig|186497.12.peg.391"/>
<dbReference type="eggNOG" id="arCOG04175">
    <property type="taxonomic scope" value="Archaea"/>
</dbReference>
<dbReference type="HOGENOM" id="CLU_177460_0_1_2"/>
<dbReference type="OrthoDB" id="191241at2157"/>
<dbReference type="PhylomeDB" id="Q8U3S9"/>
<dbReference type="Proteomes" id="UP000001013">
    <property type="component" value="Chromosome"/>
</dbReference>
<dbReference type="GO" id="GO:1990904">
    <property type="term" value="C:ribonucleoprotein complex"/>
    <property type="evidence" value="ECO:0007669"/>
    <property type="project" value="UniProtKB-KW"/>
</dbReference>
<dbReference type="GO" id="GO:0005840">
    <property type="term" value="C:ribosome"/>
    <property type="evidence" value="ECO:0007669"/>
    <property type="project" value="UniProtKB-KW"/>
</dbReference>
<dbReference type="GO" id="GO:0070180">
    <property type="term" value="F:large ribosomal subunit rRNA binding"/>
    <property type="evidence" value="ECO:0007669"/>
    <property type="project" value="UniProtKB-UniRule"/>
</dbReference>
<dbReference type="GO" id="GO:0003735">
    <property type="term" value="F:structural constituent of ribosome"/>
    <property type="evidence" value="ECO:0007669"/>
    <property type="project" value="InterPro"/>
</dbReference>
<dbReference type="GO" id="GO:0006412">
    <property type="term" value="P:translation"/>
    <property type="evidence" value="ECO:0007669"/>
    <property type="project" value="UniProtKB-UniRule"/>
</dbReference>
<dbReference type="Gene3D" id="3.10.20.10">
    <property type="match status" value="1"/>
</dbReference>
<dbReference type="HAMAP" id="MF_00273">
    <property type="entry name" value="Ribosomal_eL20"/>
    <property type="match status" value="1"/>
</dbReference>
<dbReference type="InterPro" id="IPR028877">
    <property type="entry name" value="Ribosomal_eL20"/>
</dbReference>
<dbReference type="InterPro" id="IPR023573">
    <property type="entry name" value="Ribosomal_eL20_dom"/>
</dbReference>
<dbReference type="NCBIfam" id="NF001981">
    <property type="entry name" value="PRK00773.1-1"/>
    <property type="match status" value="1"/>
</dbReference>
<dbReference type="Pfam" id="PF01775">
    <property type="entry name" value="Ribosomal_L18A"/>
    <property type="match status" value="1"/>
</dbReference>
<dbReference type="SUPFAM" id="SSF160374">
    <property type="entry name" value="RplX-like"/>
    <property type="match status" value="1"/>
</dbReference>
<accession>Q8U3S9</accession>
<comment type="subunit">
    <text evidence="1 2">Part of the 50S ribosomal subunit (PubMed:23222135). Binds 23S rRNA.</text>
</comment>
<comment type="similarity">
    <text evidence="1">Belongs to the eukaryotic ribosomal protein eL20 family.</text>
</comment>
<name>RL18A_PYRFU</name>
<keyword id="KW-0002">3D-structure</keyword>
<keyword id="KW-1185">Reference proteome</keyword>
<keyword id="KW-0687">Ribonucleoprotein</keyword>
<keyword id="KW-0689">Ribosomal protein</keyword>
<keyword id="KW-0694">RNA-binding</keyword>
<keyword id="KW-0699">rRNA-binding</keyword>
<organism>
    <name type="scientific">Pyrococcus furiosus (strain ATCC 43587 / DSM 3638 / JCM 8422 / Vc1)</name>
    <dbReference type="NCBI Taxonomy" id="186497"/>
    <lineage>
        <taxon>Archaea</taxon>
        <taxon>Methanobacteriati</taxon>
        <taxon>Methanobacteriota</taxon>
        <taxon>Thermococci</taxon>
        <taxon>Thermococcales</taxon>
        <taxon>Thermococcaceae</taxon>
        <taxon>Pyrococcus</taxon>
    </lineage>
</organism>
<proteinExistence type="evidence at protein level"/>
<reference key="1">
    <citation type="journal article" date="1999" name="Genetics">
        <title>Divergence of the hyperthermophilic archaea Pyrococcus furiosus and P. horikoshii inferred from complete genomic sequences.</title>
        <authorList>
            <person name="Maeder D.L."/>
            <person name="Weiss R.B."/>
            <person name="Dunn D.M."/>
            <person name="Cherry J.L."/>
            <person name="Gonzalez J.M."/>
            <person name="DiRuggiero J."/>
            <person name="Robb F.T."/>
        </authorList>
    </citation>
    <scope>NUCLEOTIDE SEQUENCE [LARGE SCALE GENOMIC DNA]</scope>
    <source>
        <strain>ATCC 43587 / DSM 3638 / JCM 8422 / Vc1</strain>
    </source>
</reference>
<reference evidence="3" key="2">
    <citation type="journal article" date="2013" name="Nucleic Acids Res.">
        <title>Promiscuous behaviour of archaeal ribosomal proteins: implications for eukaryotic ribosome evolution.</title>
        <authorList>
            <person name="Armache J.P."/>
            <person name="Anger A.M."/>
            <person name="Marquez V."/>
            <person name="Franckenberg S."/>
            <person name="Frohlich T."/>
            <person name="Villa E."/>
            <person name="Berninghausen O."/>
            <person name="Thomm M."/>
            <person name="Arnold G.J."/>
            <person name="Beckmann R."/>
            <person name="Wilson D.N."/>
        </authorList>
    </citation>
    <scope>STRUCTURE BY ELECTRON MICROSCOPY (6.60 ANGSTROMS) IN THE 70S RIBOSOME</scope>
    <scope>SUBUNIT</scope>
</reference>
<evidence type="ECO:0000255" key="1">
    <source>
        <dbReference type="HAMAP-Rule" id="MF_00273"/>
    </source>
</evidence>
<evidence type="ECO:0000269" key="2">
    <source>
    </source>
</evidence>
<evidence type="ECO:0007744" key="3">
    <source>
        <dbReference type="PDB" id="4V6U"/>
    </source>
</evidence>
<feature type="chain" id="PRO_0000153706" description="Large ribosomal subunit protein eL20">
    <location>
        <begin position="1"/>
        <end position="77"/>
    </location>
</feature>
<sequence>MKVKVFRVHGYFEKNGRKFKFTKEYRGIKEEDVKELVYSDIGSKHKVKRNKIFIKEIKEIRPEEAEDIVVRRLSLEL</sequence>
<protein>
    <recommendedName>
        <fullName evidence="1">Large ribosomal subunit protein eL20</fullName>
    </recommendedName>
    <alternativeName>
        <fullName>50S ribosomal protein L18Ae</fullName>
    </alternativeName>
    <alternativeName>
        <fullName>50S ribosomal protein L20e</fullName>
    </alternativeName>
    <alternativeName>
        <fullName>50S ribosomal protein LX</fullName>
    </alternativeName>
</protein>
<gene>
    <name evidence="1" type="primary">rpl18a</name>
    <name evidence="1" type="synonym">rpl20e</name>
    <name evidence="1" type="synonym">rplX</name>
    <name type="ordered locus">PF0376</name>
</gene>